<gene>
    <name type="primary">rpl2-A</name>
</gene>
<evidence type="ECO:0000250" key="1"/>
<evidence type="ECO:0000255" key="2">
    <source>
        <dbReference type="HAMAP-Rule" id="MF_01320"/>
    </source>
</evidence>
<evidence type="ECO:0000256" key="3">
    <source>
        <dbReference type="SAM" id="MobiDB-lite"/>
    </source>
</evidence>
<evidence type="ECO:0000305" key="4"/>
<proteinExistence type="inferred from homology"/>
<geneLocation type="chloroplast"/>
<protein>
    <recommendedName>
        <fullName evidence="2">Large ribosomal subunit protein uL2cz</fullName>
    </recommendedName>
    <alternativeName>
        <fullName evidence="4">50S ribosomal protein L2-A, chloroplastic</fullName>
    </alternativeName>
</protein>
<reference key="1">
    <citation type="journal article" date="2007" name="Plant Biotechnol. J.">
        <title>The complete nucleotide sequence of the coffee (Coffea arabica L.) chloroplast genome: organization and implications for biotechnology and phylogenetic relationships amongst angiosperms.</title>
        <authorList>
            <person name="Samson N."/>
            <person name="Bausher M.G."/>
            <person name="Lee S.-B."/>
            <person name="Jansen R.K."/>
            <person name="Daniell H."/>
        </authorList>
    </citation>
    <scope>NUCLEOTIDE SEQUENCE [LARGE SCALE GENOMIC DNA]</scope>
</reference>
<name>RK2A_COFAR</name>
<organism>
    <name type="scientific">Coffea arabica</name>
    <name type="common">Arabian coffee</name>
    <dbReference type="NCBI Taxonomy" id="13443"/>
    <lineage>
        <taxon>Eukaryota</taxon>
        <taxon>Viridiplantae</taxon>
        <taxon>Streptophyta</taxon>
        <taxon>Embryophyta</taxon>
        <taxon>Tracheophyta</taxon>
        <taxon>Spermatophyta</taxon>
        <taxon>Magnoliopsida</taxon>
        <taxon>eudicotyledons</taxon>
        <taxon>Gunneridae</taxon>
        <taxon>Pentapetalae</taxon>
        <taxon>asterids</taxon>
        <taxon>lamiids</taxon>
        <taxon>Gentianales</taxon>
        <taxon>Rubiaceae</taxon>
        <taxon>Ixoroideae</taxon>
        <taxon>Gardenieae complex</taxon>
        <taxon>Bertiereae - Coffeeae clade</taxon>
        <taxon>Coffeeae</taxon>
        <taxon>Coffea</taxon>
    </lineage>
</organism>
<keyword id="KW-0150">Chloroplast</keyword>
<keyword id="KW-0934">Plastid</keyword>
<keyword id="KW-1185">Reference proteome</keyword>
<keyword id="KW-0687">Ribonucleoprotein</keyword>
<keyword id="KW-0689">Ribosomal protein</keyword>
<accession>A0A377</accession>
<sequence>MAIHLYKTSTPSTRNGTVDSQVKSNPRNNLIYGQHRCGKGRNARGIITAGHRGGGHKRLYRKIDFRRTEKDIYGRIVTIEYDPNRNAYICLIHYGDGEKRYILHPRGALIGDTIVSGTEVPIKMGNALPLTDMPLGTAIHNIEITLGKGGQLARAAGAVAKLIAKEGKSATLKLPSGEVRLISKNCSATVGQVGNVGVNQKSLGRAGSKRWLGKRPVVRGVVMNPVDHPHGGGEGRAPIGRKKPTTPWGYPALGRRSRKRNKYSDNLILRRRSK</sequence>
<feature type="chain" id="PRO_0000277085" description="Large ribosomal subunit protein uL2cz">
    <location>
        <begin position="1"/>
        <end position="274"/>
    </location>
</feature>
<feature type="region of interest" description="Disordered" evidence="3">
    <location>
        <begin position="1"/>
        <end position="25"/>
    </location>
</feature>
<feature type="region of interest" description="Disordered" evidence="3">
    <location>
        <begin position="224"/>
        <end position="274"/>
    </location>
</feature>
<feature type="compositionally biased region" description="Polar residues" evidence="3">
    <location>
        <begin position="7"/>
        <end position="25"/>
    </location>
</feature>
<dbReference type="EMBL" id="EF044213">
    <property type="protein sequence ID" value="ABJ89720.1"/>
    <property type="molecule type" value="Genomic_DNA"/>
</dbReference>
<dbReference type="SMR" id="A0A377"/>
<dbReference type="OrthoDB" id="563959at2759"/>
<dbReference type="Proteomes" id="UP000515148">
    <property type="component" value="Unplaced"/>
</dbReference>
<dbReference type="GO" id="GO:0009507">
    <property type="term" value="C:chloroplast"/>
    <property type="evidence" value="ECO:0007669"/>
    <property type="project" value="UniProtKB-SubCell"/>
</dbReference>
<dbReference type="GO" id="GO:0005762">
    <property type="term" value="C:mitochondrial large ribosomal subunit"/>
    <property type="evidence" value="ECO:0007669"/>
    <property type="project" value="TreeGrafter"/>
</dbReference>
<dbReference type="GO" id="GO:0019843">
    <property type="term" value="F:rRNA binding"/>
    <property type="evidence" value="ECO:0007669"/>
    <property type="project" value="UniProtKB-UniRule"/>
</dbReference>
<dbReference type="GO" id="GO:0003735">
    <property type="term" value="F:structural constituent of ribosome"/>
    <property type="evidence" value="ECO:0007669"/>
    <property type="project" value="InterPro"/>
</dbReference>
<dbReference type="GO" id="GO:0016740">
    <property type="term" value="F:transferase activity"/>
    <property type="evidence" value="ECO:0007669"/>
    <property type="project" value="InterPro"/>
</dbReference>
<dbReference type="GO" id="GO:0032543">
    <property type="term" value="P:mitochondrial translation"/>
    <property type="evidence" value="ECO:0007669"/>
    <property type="project" value="TreeGrafter"/>
</dbReference>
<dbReference type="FunFam" id="4.10.950.10:FF:000001">
    <property type="entry name" value="50S ribosomal protein L2"/>
    <property type="match status" value="1"/>
</dbReference>
<dbReference type="FunFam" id="2.30.30.30:FF:000008">
    <property type="entry name" value="50S ribosomal protein L2, chloroplastic"/>
    <property type="match status" value="1"/>
</dbReference>
<dbReference type="FunFam" id="2.40.50.140:FF:000029">
    <property type="entry name" value="50S ribosomal protein L2, chloroplastic"/>
    <property type="match status" value="1"/>
</dbReference>
<dbReference type="Gene3D" id="2.30.30.30">
    <property type="match status" value="1"/>
</dbReference>
<dbReference type="Gene3D" id="2.40.50.140">
    <property type="entry name" value="Nucleic acid-binding proteins"/>
    <property type="match status" value="1"/>
</dbReference>
<dbReference type="Gene3D" id="4.10.950.10">
    <property type="entry name" value="Ribosomal protein L2, domain 3"/>
    <property type="match status" value="1"/>
</dbReference>
<dbReference type="HAMAP" id="MF_01320_B">
    <property type="entry name" value="Ribosomal_uL2_B"/>
    <property type="match status" value="1"/>
</dbReference>
<dbReference type="InterPro" id="IPR012340">
    <property type="entry name" value="NA-bd_OB-fold"/>
</dbReference>
<dbReference type="InterPro" id="IPR014722">
    <property type="entry name" value="Rib_uL2_dom2"/>
</dbReference>
<dbReference type="InterPro" id="IPR002171">
    <property type="entry name" value="Ribosomal_uL2"/>
</dbReference>
<dbReference type="InterPro" id="IPR005880">
    <property type="entry name" value="Ribosomal_uL2_bac/org-type"/>
</dbReference>
<dbReference type="InterPro" id="IPR022669">
    <property type="entry name" value="Ribosomal_uL2_C"/>
</dbReference>
<dbReference type="InterPro" id="IPR022671">
    <property type="entry name" value="Ribosomal_uL2_CS"/>
</dbReference>
<dbReference type="InterPro" id="IPR014726">
    <property type="entry name" value="Ribosomal_uL2_dom3"/>
</dbReference>
<dbReference type="InterPro" id="IPR022666">
    <property type="entry name" value="Ribosomal_uL2_RNA-bd_dom"/>
</dbReference>
<dbReference type="InterPro" id="IPR008991">
    <property type="entry name" value="Translation_prot_SH3-like_sf"/>
</dbReference>
<dbReference type="NCBIfam" id="TIGR01171">
    <property type="entry name" value="rplB_bact"/>
    <property type="match status" value="1"/>
</dbReference>
<dbReference type="PANTHER" id="PTHR13691:SF5">
    <property type="entry name" value="LARGE RIBOSOMAL SUBUNIT PROTEIN UL2M"/>
    <property type="match status" value="1"/>
</dbReference>
<dbReference type="PANTHER" id="PTHR13691">
    <property type="entry name" value="RIBOSOMAL PROTEIN L2"/>
    <property type="match status" value="1"/>
</dbReference>
<dbReference type="Pfam" id="PF00181">
    <property type="entry name" value="Ribosomal_L2"/>
    <property type="match status" value="1"/>
</dbReference>
<dbReference type="Pfam" id="PF03947">
    <property type="entry name" value="Ribosomal_L2_C"/>
    <property type="match status" value="1"/>
</dbReference>
<dbReference type="PIRSF" id="PIRSF002158">
    <property type="entry name" value="Ribosomal_L2"/>
    <property type="match status" value="1"/>
</dbReference>
<dbReference type="SMART" id="SM01383">
    <property type="entry name" value="Ribosomal_L2"/>
    <property type="match status" value="1"/>
</dbReference>
<dbReference type="SMART" id="SM01382">
    <property type="entry name" value="Ribosomal_L2_C"/>
    <property type="match status" value="1"/>
</dbReference>
<dbReference type="SUPFAM" id="SSF50249">
    <property type="entry name" value="Nucleic acid-binding proteins"/>
    <property type="match status" value="1"/>
</dbReference>
<dbReference type="SUPFAM" id="SSF50104">
    <property type="entry name" value="Translation proteins SH3-like domain"/>
    <property type="match status" value="1"/>
</dbReference>
<dbReference type="PROSITE" id="PS00467">
    <property type="entry name" value="RIBOSOMAL_L2"/>
    <property type="match status" value="1"/>
</dbReference>
<comment type="subunit">
    <text evidence="1">Part of the 50S ribosomal subunit.</text>
</comment>
<comment type="subcellular location">
    <subcellularLocation>
        <location>Plastid</location>
        <location>Chloroplast</location>
    </subcellularLocation>
</comment>
<comment type="similarity">
    <text evidence="4">Belongs to the universal ribosomal protein uL2 family.</text>
</comment>
<comment type="caution">
    <text evidence="4">There is 1 gene for this protein in each of the chloroplast inverted repeats; while they are usually identical, in this organism they are not. The other copy is AC A0A398.</text>
</comment>